<organism>
    <name type="scientific">Mus musculus</name>
    <name type="common">Mouse</name>
    <dbReference type="NCBI Taxonomy" id="10090"/>
    <lineage>
        <taxon>Eukaryota</taxon>
        <taxon>Metazoa</taxon>
        <taxon>Chordata</taxon>
        <taxon>Craniata</taxon>
        <taxon>Vertebrata</taxon>
        <taxon>Euteleostomi</taxon>
        <taxon>Mammalia</taxon>
        <taxon>Eutheria</taxon>
        <taxon>Euarchontoglires</taxon>
        <taxon>Glires</taxon>
        <taxon>Rodentia</taxon>
        <taxon>Myomorpha</taxon>
        <taxon>Muroidea</taxon>
        <taxon>Muridae</taxon>
        <taxon>Murinae</taxon>
        <taxon>Mus</taxon>
        <taxon>Mus</taxon>
    </lineage>
</organism>
<evidence type="ECO:0000305" key="1"/>
<evidence type="ECO:0000312" key="2">
    <source>
        <dbReference type="MGI" id="MGI:1916678"/>
    </source>
</evidence>
<proteinExistence type="evidence at transcript level"/>
<gene>
    <name evidence="2" type="primary">SPMIP3</name>
</gene>
<keyword id="KW-1185">Reference proteome</keyword>
<feature type="chain" id="PRO_0000274316" description="Protein SPMIP3">
    <location>
        <begin position="1"/>
        <end position="145"/>
    </location>
</feature>
<name>SMIP3_MOUSE</name>
<sequence>MSTIRLREFVERRPSIPPRLYITHQGRDIKGYYPGQLARLHFDYSGRKAPRPLIDLTIPLKSTTPYQPQLDQQTLIRSICSRRLSRPTDLWHNETSYQRDYSLPFYESGWDRKLGTISLHPRPVNSVPEVYCCGGERSSYARSTF</sequence>
<reference key="1">
    <citation type="journal article" date="2005" name="Science">
        <title>The transcriptional landscape of the mammalian genome.</title>
        <authorList>
            <person name="Carninci P."/>
            <person name="Kasukawa T."/>
            <person name="Katayama S."/>
            <person name="Gough J."/>
            <person name="Frith M.C."/>
            <person name="Maeda N."/>
            <person name="Oyama R."/>
            <person name="Ravasi T."/>
            <person name="Lenhard B."/>
            <person name="Wells C."/>
            <person name="Kodzius R."/>
            <person name="Shimokawa K."/>
            <person name="Bajic V.B."/>
            <person name="Brenner S.E."/>
            <person name="Batalov S."/>
            <person name="Forrest A.R."/>
            <person name="Zavolan M."/>
            <person name="Davis M.J."/>
            <person name="Wilming L.G."/>
            <person name="Aidinis V."/>
            <person name="Allen J.E."/>
            <person name="Ambesi-Impiombato A."/>
            <person name="Apweiler R."/>
            <person name="Aturaliya R.N."/>
            <person name="Bailey T.L."/>
            <person name="Bansal M."/>
            <person name="Baxter L."/>
            <person name="Beisel K.W."/>
            <person name="Bersano T."/>
            <person name="Bono H."/>
            <person name="Chalk A.M."/>
            <person name="Chiu K.P."/>
            <person name="Choudhary V."/>
            <person name="Christoffels A."/>
            <person name="Clutterbuck D.R."/>
            <person name="Crowe M.L."/>
            <person name="Dalla E."/>
            <person name="Dalrymple B.P."/>
            <person name="de Bono B."/>
            <person name="Della Gatta G."/>
            <person name="di Bernardo D."/>
            <person name="Down T."/>
            <person name="Engstrom P."/>
            <person name="Fagiolini M."/>
            <person name="Faulkner G."/>
            <person name="Fletcher C.F."/>
            <person name="Fukushima T."/>
            <person name="Furuno M."/>
            <person name="Futaki S."/>
            <person name="Gariboldi M."/>
            <person name="Georgii-Hemming P."/>
            <person name="Gingeras T.R."/>
            <person name="Gojobori T."/>
            <person name="Green R.E."/>
            <person name="Gustincich S."/>
            <person name="Harbers M."/>
            <person name="Hayashi Y."/>
            <person name="Hensch T.K."/>
            <person name="Hirokawa N."/>
            <person name="Hill D."/>
            <person name="Huminiecki L."/>
            <person name="Iacono M."/>
            <person name="Ikeo K."/>
            <person name="Iwama A."/>
            <person name="Ishikawa T."/>
            <person name="Jakt M."/>
            <person name="Kanapin A."/>
            <person name="Katoh M."/>
            <person name="Kawasawa Y."/>
            <person name="Kelso J."/>
            <person name="Kitamura H."/>
            <person name="Kitano H."/>
            <person name="Kollias G."/>
            <person name="Krishnan S.P."/>
            <person name="Kruger A."/>
            <person name="Kummerfeld S.K."/>
            <person name="Kurochkin I.V."/>
            <person name="Lareau L.F."/>
            <person name="Lazarevic D."/>
            <person name="Lipovich L."/>
            <person name="Liu J."/>
            <person name="Liuni S."/>
            <person name="McWilliam S."/>
            <person name="Madan Babu M."/>
            <person name="Madera M."/>
            <person name="Marchionni L."/>
            <person name="Matsuda H."/>
            <person name="Matsuzawa S."/>
            <person name="Miki H."/>
            <person name="Mignone F."/>
            <person name="Miyake S."/>
            <person name="Morris K."/>
            <person name="Mottagui-Tabar S."/>
            <person name="Mulder N."/>
            <person name="Nakano N."/>
            <person name="Nakauchi H."/>
            <person name="Ng P."/>
            <person name="Nilsson R."/>
            <person name="Nishiguchi S."/>
            <person name="Nishikawa S."/>
            <person name="Nori F."/>
            <person name="Ohara O."/>
            <person name="Okazaki Y."/>
            <person name="Orlando V."/>
            <person name="Pang K.C."/>
            <person name="Pavan W.J."/>
            <person name="Pavesi G."/>
            <person name="Pesole G."/>
            <person name="Petrovsky N."/>
            <person name="Piazza S."/>
            <person name="Reed J."/>
            <person name="Reid J.F."/>
            <person name="Ring B.Z."/>
            <person name="Ringwald M."/>
            <person name="Rost B."/>
            <person name="Ruan Y."/>
            <person name="Salzberg S.L."/>
            <person name="Sandelin A."/>
            <person name="Schneider C."/>
            <person name="Schoenbach C."/>
            <person name="Sekiguchi K."/>
            <person name="Semple C.A."/>
            <person name="Seno S."/>
            <person name="Sessa L."/>
            <person name="Sheng Y."/>
            <person name="Shibata Y."/>
            <person name="Shimada H."/>
            <person name="Shimada K."/>
            <person name="Silva D."/>
            <person name="Sinclair B."/>
            <person name="Sperling S."/>
            <person name="Stupka E."/>
            <person name="Sugiura K."/>
            <person name="Sultana R."/>
            <person name="Takenaka Y."/>
            <person name="Taki K."/>
            <person name="Tammoja K."/>
            <person name="Tan S.L."/>
            <person name="Tang S."/>
            <person name="Taylor M.S."/>
            <person name="Tegner J."/>
            <person name="Teichmann S.A."/>
            <person name="Ueda H.R."/>
            <person name="van Nimwegen E."/>
            <person name="Verardo R."/>
            <person name="Wei C.L."/>
            <person name="Yagi K."/>
            <person name="Yamanishi H."/>
            <person name="Zabarovsky E."/>
            <person name="Zhu S."/>
            <person name="Zimmer A."/>
            <person name="Hide W."/>
            <person name="Bult C."/>
            <person name="Grimmond S.M."/>
            <person name="Teasdale R.D."/>
            <person name="Liu E.T."/>
            <person name="Brusic V."/>
            <person name="Quackenbush J."/>
            <person name="Wahlestedt C."/>
            <person name="Mattick J.S."/>
            <person name="Hume D.A."/>
            <person name="Kai C."/>
            <person name="Sasaki D."/>
            <person name="Tomaru Y."/>
            <person name="Fukuda S."/>
            <person name="Kanamori-Katayama M."/>
            <person name="Suzuki M."/>
            <person name="Aoki J."/>
            <person name="Arakawa T."/>
            <person name="Iida J."/>
            <person name="Imamura K."/>
            <person name="Itoh M."/>
            <person name="Kato T."/>
            <person name="Kawaji H."/>
            <person name="Kawagashira N."/>
            <person name="Kawashima T."/>
            <person name="Kojima M."/>
            <person name="Kondo S."/>
            <person name="Konno H."/>
            <person name="Nakano K."/>
            <person name="Ninomiya N."/>
            <person name="Nishio T."/>
            <person name="Okada M."/>
            <person name="Plessy C."/>
            <person name="Shibata K."/>
            <person name="Shiraki T."/>
            <person name="Suzuki S."/>
            <person name="Tagami M."/>
            <person name="Waki K."/>
            <person name="Watahiki A."/>
            <person name="Okamura-Oho Y."/>
            <person name="Suzuki H."/>
            <person name="Kawai J."/>
            <person name="Hayashizaki Y."/>
        </authorList>
    </citation>
    <scope>NUCLEOTIDE SEQUENCE [LARGE SCALE MRNA]</scope>
    <source>
        <strain>C57BL/6J</strain>
        <tissue>Testis</tissue>
    </source>
</reference>
<accession>Q9DAA7</accession>
<protein>
    <recommendedName>
        <fullName evidence="1">Protein SPMIP3</fullName>
    </recommendedName>
    <alternativeName>
        <fullName evidence="2">Sperm microtubule inner protein 3</fullName>
    </alternativeName>
    <alternativeName>
        <fullName>Sperm-associated microtubule inner protein 3</fullName>
    </alternativeName>
</protein>
<dbReference type="EMBL" id="AK006014">
    <property type="protein sequence ID" value="BAB24367.1"/>
    <property type="molecule type" value="mRNA"/>
</dbReference>
<dbReference type="CCDS" id="CCDS48462.1"/>
<dbReference type="RefSeq" id="NP_081353.1">
    <property type="nucleotide sequence ID" value="NM_027077.2"/>
</dbReference>
<dbReference type="RefSeq" id="XP_006497039.1">
    <property type="nucleotide sequence ID" value="XM_006496976.3"/>
</dbReference>
<dbReference type="RefSeq" id="XP_017177918.1">
    <property type="nucleotide sequence ID" value="XM_017322429.1"/>
</dbReference>
<dbReference type="SMR" id="Q9DAA7"/>
<dbReference type="iPTMnet" id="Q9DAA7"/>
<dbReference type="PhosphoSitePlus" id="Q9DAA7"/>
<dbReference type="PaxDb" id="10090-ENSMUSP00000016106"/>
<dbReference type="Antibodypedia" id="34712">
    <property type="antibodies" value="37 antibodies from 7 providers"/>
</dbReference>
<dbReference type="Ensembl" id="ENSMUST00000016106.6">
    <property type="protein sequence ID" value="ENSMUSP00000016106.6"/>
    <property type="gene ID" value="ENSMUSG00000015962.6"/>
</dbReference>
<dbReference type="GeneID" id="69428"/>
<dbReference type="KEGG" id="mmu:69428"/>
<dbReference type="UCSC" id="uc007dur.1">
    <property type="organism name" value="mouse"/>
</dbReference>
<dbReference type="AGR" id="MGI:1916678"/>
<dbReference type="CTD" id="200159"/>
<dbReference type="MGI" id="MGI:1916678">
    <property type="gene designation" value="Spmip3"/>
</dbReference>
<dbReference type="VEuPathDB" id="HostDB:ENSMUSG00000015962"/>
<dbReference type="eggNOG" id="ENOG502STJK">
    <property type="taxonomic scope" value="Eukaryota"/>
</dbReference>
<dbReference type="GeneTree" id="ENSGT00390000017364"/>
<dbReference type="HOGENOM" id="CLU_149432_0_0_1"/>
<dbReference type="InParanoid" id="Q9DAA7"/>
<dbReference type="OMA" id="HIWLREF"/>
<dbReference type="OrthoDB" id="10034627at2759"/>
<dbReference type="PhylomeDB" id="Q9DAA7"/>
<dbReference type="TreeFam" id="TF337910"/>
<dbReference type="BioGRID-ORCS" id="69428">
    <property type="hits" value="3 hits in 76 CRISPR screens"/>
</dbReference>
<dbReference type="PRO" id="PR:Q9DAA7"/>
<dbReference type="Proteomes" id="UP000000589">
    <property type="component" value="Chromosome 1"/>
</dbReference>
<dbReference type="RNAct" id="Q9DAA7">
    <property type="molecule type" value="protein"/>
</dbReference>
<dbReference type="Bgee" id="ENSMUSG00000015962">
    <property type="expression patterns" value="Expressed in seminiferous tubule of testis and 38 other cell types or tissues"/>
</dbReference>
<dbReference type="InterPro" id="IPR037668">
    <property type="entry name" value="SPMIP3"/>
</dbReference>
<dbReference type="PANTHER" id="PTHR31763:SF2">
    <property type="entry name" value="CHROMOSOME 1 OPEN READING FRAME 100"/>
    <property type="match status" value="1"/>
</dbReference>
<dbReference type="PANTHER" id="PTHR31763">
    <property type="entry name" value="HYPOTHETICAL PROTEIN LOC689766"/>
    <property type="match status" value="1"/>
</dbReference>
<dbReference type="Pfam" id="PF17670">
    <property type="entry name" value="DUF5530"/>
    <property type="match status" value="1"/>
</dbReference>